<feature type="chain" id="PRO_1000146353" description="ATP synthase epsilon chain">
    <location>
        <begin position="1"/>
        <end position="139"/>
    </location>
</feature>
<gene>
    <name evidence="1" type="primary">atpC</name>
    <name type="ordered locus">SPP_1526</name>
</gene>
<evidence type="ECO:0000255" key="1">
    <source>
        <dbReference type="HAMAP-Rule" id="MF_00530"/>
    </source>
</evidence>
<reference key="1">
    <citation type="journal article" date="2010" name="Genome Biol.">
        <title>Structure and dynamics of the pan-genome of Streptococcus pneumoniae and closely related species.</title>
        <authorList>
            <person name="Donati C."/>
            <person name="Hiller N.L."/>
            <person name="Tettelin H."/>
            <person name="Muzzi A."/>
            <person name="Croucher N.J."/>
            <person name="Angiuoli S.V."/>
            <person name="Oggioni M."/>
            <person name="Dunning Hotopp J.C."/>
            <person name="Hu F.Z."/>
            <person name="Riley D.R."/>
            <person name="Covacci A."/>
            <person name="Mitchell T.J."/>
            <person name="Bentley S.D."/>
            <person name="Kilian M."/>
            <person name="Ehrlich G.D."/>
            <person name="Rappuoli R."/>
            <person name="Moxon E.R."/>
            <person name="Masignani V."/>
        </authorList>
    </citation>
    <scope>NUCLEOTIDE SEQUENCE [LARGE SCALE GENOMIC DNA]</scope>
    <source>
        <strain>P1031</strain>
    </source>
</reference>
<protein>
    <recommendedName>
        <fullName evidence="1">ATP synthase epsilon chain</fullName>
    </recommendedName>
    <alternativeName>
        <fullName evidence="1">ATP synthase F1 sector epsilon subunit</fullName>
    </alternativeName>
    <alternativeName>
        <fullName evidence="1">F-ATPase epsilon subunit</fullName>
    </alternativeName>
</protein>
<dbReference type="EMBL" id="CP000920">
    <property type="protein sequence ID" value="ACO20667.1"/>
    <property type="molecule type" value="Genomic_DNA"/>
</dbReference>
<dbReference type="RefSeq" id="WP_000068050.1">
    <property type="nucleotide sequence ID" value="NC_012467.1"/>
</dbReference>
<dbReference type="SMR" id="C1CLK5"/>
<dbReference type="KEGG" id="spp:SPP_1526"/>
<dbReference type="HOGENOM" id="CLU_084338_1_0_9"/>
<dbReference type="GO" id="GO:0005886">
    <property type="term" value="C:plasma membrane"/>
    <property type="evidence" value="ECO:0007669"/>
    <property type="project" value="UniProtKB-SubCell"/>
</dbReference>
<dbReference type="GO" id="GO:0045259">
    <property type="term" value="C:proton-transporting ATP synthase complex"/>
    <property type="evidence" value="ECO:0007669"/>
    <property type="project" value="UniProtKB-KW"/>
</dbReference>
<dbReference type="GO" id="GO:0005524">
    <property type="term" value="F:ATP binding"/>
    <property type="evidence" value="ECO:0007669"/>
    <property type="project" value="UniProtKB-UniRule"/>
</dbReference>
<dbReference type="GO" id="GO:0046933">
    <property type="term" value="F:proton-transporting ATP synthase activity, rotational mechanism"/>
    <property type="evidence" value="ECO:0007669"/>
    <property type="project" value="UniProtKB-UniRule"/>
</dbReference>
<dbReference type="CDD" id="cd12152">
    <property type="entry name" value="F1-ATPase_delta"/>
    <property type="match status" value="1"/>
</dbReference>
<dbReference type="FunFam" id="1.20.5.440:FF:000001">
    <property type="entry name" value="ATP synthase epsilon chain"/>
    <property type="match status" value="1"/>
</dbReference>
<dbReference type="Gene3D" id="1.20.5.440">
    <property type="entry name" value="ATP synthase delta/epsilon subunit, C-terminal domain"/>
    <property type="match status" value="1"/>
</dbReference>
<dbReference type="Gene3D" id="2.60.15.10">
    <property type="entry name" value="F0F1 ATP synthase delta/epsilon subunit, N-terminal"/>
    <property type="match status" value="1"/>
</dbReference>
<dbReference type="HAMAP" id="MF_00530">
    <property type="entry name" value="ATP_synth_epsil_bac"/>
    <property type="match status" value="1"/>
</dbReference>
<dbReference type="InterPro" id="IPR001469">
    <property type="entry name" value="ATP_synth_F1_dsu/esu"/>
</dbReference>
<dbReference type="InterPro" id="IPR020546">
    <property type="entry name" value="ATP_synth_F1_dsu/esu_N"/>
</dbReference>
<dbReference type="InterPro" id="IPR020547">
    <property type="entry name" value="ATP_synth_F1_esu_C"/>
</dbReference>
<dbReference type="InterPro" id="IPR036771">
    <property type="entry name" value="ATPsynth_dsu/esu_N"/>
</dbReference>
<dbReference type="NCBIfam" id="TIGR01216">
    <property type="entry name" value="ATP_synt_epsi"/>
    <property type="match status" value="1"/>
</dbReference>
<dbReference type="NCBIfam" id="NF001846">
    <property type="entry name" value="PRK00571.1-3"/>
    <property type="match status" value="1"/>
</dbReference>
<dbReference type="PANTHER" id="PTHR13822">
    <property type="entry name" value="ATP SYNTHASE DELTA/EPSILON CHAIN"/>
    <property type="match status" value="1"/>
</dbReference>
<dbReference type="PANTHER" id="PTHR13822:SF10">
    <property type="entry name" value="ATP SYNTHASE EPSILON CHAIN, CHLOROPLASTIC"/>
    <property type="match status" value="1"/>
</dbReference>
<dbReference type="Pfam" id="PF00401">
    <property type="entry name" value="ATP-synt_DE"/>
    <property type="match status" value="1"/>
</dbReference>
<dbReference type="Pfam" id="PF02823">
    <property type="entry name" value="ATP-synt_DE_N"/>
    <property type="match status" value="1"/>
</dbReference>
<dbReference type="SUPFAM" id="SSF51344">
    <property type="entry name" value="Epsilon subunit of F1F0-ATP synthase N-terminal domain"/>
    <property type="match status" value="1"/>
</dbReference>
<name>ATPE_STRZP</name>
<proteinExistence type="inferred from homology"/>
<comment type="function">
    <text evidence="1">Produces ATP from ADP in the presence of a proton gradient across the membrane.</text>
</comment>
<comment type="subunit">
    <text evidence="1">F-type ATPases have 2 components, CF(1) - the catalytic core - and CF(0) - the membrane proton channel. CF(1) has five subunits: alpha(3), beta(3), gamma(1), delta(1), epsilon(1). CF(0) has three main subunits: a, b and c.</text>
</comment>
<comment type="subcellular location">
    <subcellularLocation>
        <location evidence="1">Cell membrane</location>
        <topology evidence="1">Peripheral membrane protein</topology>
    </subcellularLocation>
</comment>
<comment type="similarity">
    <text evidence="1">Belongs to the ATPase epsilon chain family.</text>
</comment>
<accession>C1CLK5</accession>
<keyword id="KW-0066">ATP synthesis</keyword>
<keyword id="KW-1003">Cell membrane</keyword>
<keyword id="KW-0139">CF(1)</keyword>
<keyword id="KW-0375">Hydrogen ion transport</keyword>
<keyword id="KW-0406">Ion transport</keyword>
<keyword id="KW-0472">Membrane</keyword>
<keyword id="KW-0813">Transport</keyword>
<organism>
    <name type="scientific">Streptococcus pneumoniae (strain P1031)</name>
    <dbReference type="NCBI Taxonomy" id="488223"/>
    <lineage>
        <taxon>Bacteria</taxon>
        <taxon>Bacillati</taxon>
        <taxon>Bacillota</taxon>
        <taxon>Bacilli</taxon>
        <taxon>Lactobacillales</taxon>
        <taxon>Streptococcaceae</taxon>
        <taxon>Streptococcus</taxon>
    </lineage>
</organism>
<sequence>MAQLTVQIVTPDGLVYDHHASYVSVRTLDGEMGILPRHENMIAVLAVDEVKVKRIDDKDHVNWIAVNGGVIEIANDMITIVADSAERARDIDISRAERAKLRAERAIEEAQDKHLIDQERRAKIALQRAINRINVGNRL</sequence>